<protein>
    <recommendedName>
        <fullName>Transcriptional repressor scratch 1</fullName>
    </recommendedName>
    <alternativeName>
        <fullName>Scratch homolog 1 zinc finger protein</fullName>
        <shortName>SCRT</shortName>
        <shortName>Scratch 1</shortName>
        <shortName>hScrt</shortName>
    </alternativeName>
</protein>
<proteinExistence type="evidence at protein level"/>
<evidence type="ECO:0000250" key="1"/>
<evidence type="ECO:0000255" key="2">
    <source>
        <dbReference type="PROSITE-ProRule" id="PRU00042"/>
    </source>
</evidence>
<evidence type="ECO:0000256" key="3">
    <source>
        <dbReference type="SAM" id="MobiDB-lite"/>
    </source>
</evidence>
<evidence type="ECO:0000269" key="4">
    <source>
    </source>
</evidence>
<evidence type="ECO:0000305" key="5"/>
<comment type="function">
    <text evidence="4">Transcriptional repressor that binds E-box motif CAGGTG. Can modulate the action of basic helix-loop-helix (bHLH) transcription factors, critical for neuronal differentiation.</text>
</comment>
<comment type="subunit">
    <text evidence="1">Interacts (via SNAG domain) with LIMD1 (via LIM domains), WTIP (via LIM domains) and AJUBA (via LIM domains).</text>
</comment>
<comment type="subcellular location">
    <subcellularLocation>
        <location evidence="4">Nucleus</location>
    </subcellularLocation>
</comment>
<comment type="tissue specificity">
    <text evidence="4">Brain specific.</text>
</comment>
<comment type="domain">
    <text>The N-terminal non zinc-finger region mediates the repressor activity.</text>
</comment>
<comment type="similarity">
    <text evidence="5">Belongs to the snail C2H2-type zinc-finger protein family.</text>
</comment>
<name>SCRT1_HUMAN</name>
<feature type="chain" id="PRO_0000047036" description="Transcriptional repressor scratch 1">
    <location>
        <begin position="1"/>
        <end position="348"/>
    </location>
</feature>
<feature type="zinc finger region" description="C2H2-type 1" evidence="2">
    <location>
        <begin position="191"/>
        <end position="213"/>
    </location>
</feature>
<feature type="zinc finger region" description="C2H2-type 2" evidence="2">
    <location>
        <begin position="222"/>
        <end position="244"/>
    </location>
</feature>
<feature type="zinc finger region" description="C2H2-type 3" evidence="2">
    <location>
        <begin position="248"/>
        <end position="270"/>
    </location>
</feature>
<feature type="zinc finger region" description="C2H2-type 4" evidence="2">
    <location>
        <begin position="276"/>
        <end position="298"/>
    </location>
</feature>
<feature type="zinc finger region" description="C2H2-type 5; atypical" evidence="2">
    <location>
        <begin position="304"/>
        <end position="327"/>
    </location>
</feature>
<feature type="region of interest" description="SNAG domain" evidence="1">
    <location>
        <begin position="1"/>
        <end position="20"/>
    </location>
</feature>
<feature type="region of interest" description="Disordered" evidence="3">
    <location>
        <begin position="130"/>
        <end position="189"/>
    </location>
</feature>
<feature type="compositionally biased region" description="Low complexity" evidence="3">
    <location>
        <begin position="130"/>
        <end position="147"/>
    </location>
</feature>
<feature type="compositionally biased region" description="Gly residues" evidence="3">
    <location>
        <begin position="148"/>
        <end position="172"/>
    </location>
</feature>
<feature type="compositionally biased region" description="Low complexity" evidence="3">
    <location>
        <begin position="173"/>
        <end position="182"/>
    </location>
</feature>
<feature type="sequence variant" id="VAR_045990" description="In dbSNP:rs7013127." evidence="4">
    <original>A</original>
    <variation>S</variation>
    <location>
        <position position="133"/>
    </location>
</feature>
<organism>
    <name type="scientific">Homo sapiens</name>
    <name type="common">Human</name>
    <dbReference type="NCBI Taxonomy" id="9606"/>
    <lineage>
        <taxon>Eukaryota</taxon>
        <taxon>Metazoa</taxon>
        <taxon>Chordata</taxon>
        <taxon>Craniata</taxon>
        <taxon>Vertebrata</taxon>
        <taxon>Euteleostomi</taxon>
        <taxon>Mammalia</taxon>
        <taxon>Eutheria</taxon>
        <taxon>Euarchontoglires</taxon>
        <taxon>Primates</taxon>
        <taxon>Haplorrhini</taxon>
        <taxon>Catarrhini</taxon>
        <taxon>Hominidae</taxon>
        <taxon>Homo</taxon>
    </lineage>
</organism>
<reference key="1">
    <citation type="journal article" date="2001" name="Proc. Natl. Acad. Sci. U.S.A.">
        <title>Mammalian scratch: a neural-specific snail family transcriptional repressor.</title>
        <authorList>
            <person name="Nakakura E.K."/>
            <person name="Watkins D.N."/>
            <person name="Schuebel K.E."/>
            <person name="Sriuranpong V."/>
            <person name="Borges M.W."/>
            <person name="Nelkin B.D."/>
            <person name="Ball D.W."/>
        </authorList>
    </citation>
    <scope>NUCLEOTIDE SEQUENCE [MRNA]</scope>
    <scope>FUNCTION</scope>
    <scope>SUBCELLULAR LOCATION</scope>
    <scope>TISSUE SPECIFICITY</scope>
    <scope>INTERACTION WITH E-BOX MOTIF</scope>
    <scope>VARIANT SER-133</scope>
    <source>
        <tissue>Brain</tissue>
    </source>
</reference>
<reference key="2">
    <citation type="submission" date="2005-09" db="EMBL/GenBank/DDBJ databases">
        <authorList>
            <person name="Mural R.J."/>
            <person name="Istrail S."/>
            <person name="Sutton G.G."/>
            <person name="Florea L."/>
            <person name="Halpern A.L."/>
            <person name="Mobarry C.M."/>
            <person name="Lippert R."/>
            <person name="Walenz B."/>
            <person name="Shatkay H."/>
            <person name="Dew I."/>
            <person name="Miller J.R."/>
            <person name="Flanigan M.J."/>
            <person name="Edwards N.J."/>
            <person name="Bolanos R."/>
            <person name="Fasulo D."/>
            <person name="Halldorsson B.V."/>
            <person name="Hannenhalli S."/>
            <person name="Turner R."/>
            <person name="Yooseph S."/>
            <person name="Lu F."/>
            <person name="Nusskern D.R."/>
            <person name="Shue B.C."/>
            <person name="Zheng X.H."/>
            <person name="Zhong F."/>
            <person name="Delcher A.L."/>
            <person name="Huson D.H."/>
            <person name="Kravitz S.A."/>
            <person name="Mouchard L."/>
            <person name="Reinert K."/>
            <person name="Remington K.A."/>
            <person name="Clark A.G."/>
            <person name="Waterman M.S."/>
            <person name="Eichler E.E."/>
            <person name="Adams M.D."/>
            <person name="Hunkapiller M.W."/>
            <person name="Myers E.W."/>
            <person name="Venter J.C."/>
        </authorList>
    </citation>
    <scope>NUCLEOTIDE SEQUENCE [LARGE SCALE GENOMIC DNA]</scope>
</reference>
<reference key="3">
    <citation type="journal article" date="2004" name="Genome Res.">
        <title>The status, quality, and expansion of the NIH full-length cDNA project: the Mammalian Gene Collection (MGC).</title>
        <authorList>
            <consortium name="The MGC Project Team"/>
        </authorList>
    </citation>
    <scope>NUCLEOTIDE SEQUENCE [LARGE SCALE MRNA] OF 185-348</scope>
    <source>
        <tissue>Brain</tissue>
    </source>
</reference>
<sequence>MPRSFLVKKVKLDAFSSADLESAYGRARSDLGAPLHDKGYLSDYVGPSSVYDGDAEAALLKGPSPEPMYAAAVRGELGPAAAGSAPPPTPRPELATAAGGYINGDAAVSEGYAADAFFITDGRSRRKASNAGAAAAPSTASAAAPDGDAGGGGGAGGRSLGSGPGGRGGTRAGAGTEARAGPGAAGAGGRHACGECGKTYATSSNLSRHKQTHRSLDSQLARRCPTCGKVYVSMPAMAMHLLTHDLRHKCGVCGKAFSRPWLLQGHMRSHTGEKPFGCAHCGKAFADRSNLRAHMQTHSAFKHFQCKRCKKSFALKSYLNKHYESACFKGGAGGPAAPAPPQLSPVQA</sequence>
<keyword id="KW-0238">DNA-binding</keyword>
<keyword id="KW-0479">Metal-binding</keyword>
<keyword id="KW-0539">Nucleus</keyword>
<keyword id="KW-1267">Proteomics identification</keyword>
<keyword id="KW-1185">Reference proteome</keyword>
<keyword id="KW-0677">Repeat</keyword>
<keyword id="KW-0678">Repressor</keyword>
<keyword id="KW-0804">Transcription</keyword>
<keyword id="KW-0805">Transcription regulation</keyword>
<keyword id="KW-0862">Zinc</keyword>
<keyword id="KW-0863">Zinc-finger</keyword>
<accession>Q9BWW7</accession>
<accession>A8MX66</accession>
<accession>Q96C52</accession>
<gene>
    <name type="primary">SCRT1</name>
</gene>
<dbReference type="EMBL" id="AY014996">
    <property type="protein sequence ID" value="AAK01467.1"/>
    <property type="molecule type" value="mRNA"/>
</dbReference>
<dbReference type="EMBL" id="CH471162">
    <property type="protein sequence ID" value="EAW82125.1"/>
    <property type="molecule type" value="Genomic_DNA"/>
</dbReference>
<dbReference type="EMBL" id="BC014675">
    <property type="protein sequence ID" value="AAH14675.1"/>
    <property type="molecule type" value="mRNA"/>
</dbReference>
<dbReference type="CCDS" id="CCDS6421.1"/>
<dbReference type="RefSeq" id="NP_112599.2">
    <property type="nucleotide sequence ID" value="NM_031309.6"/>
</dbReference>
<dbReference type="SMR" id="Q9BWW7"/>
<dbReference type="BioGRID" id="123667">
    <property type="interactions" value="26"/>
</dbReference>
<dbReference type="FunCoup" id="Q9BWW7">
    <property type="interactions" value="306"/>
</dbReference>
<dbReference type="IntAct" id="Q9BWW7">
    <property type="interactions" value="8"/>
</dbReference>
<dbReference type="STRING" id="9606.ENSP00000455711"/>
<dbReference type="GlyGen" id="Q9BWW7">
    <property type="glycosylation" value="1 site"/>
</dbReference>
<dbReference type="iPTMnet" id="Q9BWW7"/>
<dbReference type="PhosphoSitePlus" id="Q9BWW7"/>
<dbReference type="BioMuta" id="SCRT1"/>
<dbReference type="DMDM" id="46397014"/>
<dbReference type="jPOST" id="Q9BWW7"/>
<dbReference type="MassIVE" id="Q9BWW7"/>
<dbReference type="PaxDb" id="9606-ENSP00000455711"/>
<dbReference type="PeptideAtlas" id="Q9BWW7"/>
<dbReference type="ProteomicsDB" id="79334"/>
<dbReference type="Antibodypedia" id="59727">
    <property type="antibodies" value="29 antibodies from 13 providers"/>
</dbReference>
<dbReference type="DNASU" id="83482"/>
<dbReference type="Ensembl" id="ENST00000569446.3">
    <property type="protein sequence ID" value="ENSP00000455711.1"/>
    <property type="gene ID" value="ENSG00000261678.3"/>
</dbReference>
<dbReference type="Ensembl" id="ENST00000645782.2">
    <property type="protein sequence ID" value="ENSP00000496266.1"/>
    <property type="gene ID" value="ENSG00000284923.2"/>
</dbReference>
<dbReference type="GeneID" id="83482"/>
<dbReference type="KEGG" id="hsa:83482"/>
<dbReference type="MANE-Select" id="ENST00000569446.3">
    <property type="protein sequence ID" value="ENSP00000455711.1"/>
    <property type="RefSeq nucleotide sequence ID" value="NM_031309.6"/>
    <property type="RefSeq protein sequence ID" value="NP_112599.2"/>
</dbReference>
<dbReference type="UCSC" id="uc033ccm.1">
    <property type="organism name" value="human"/>
</dbReference>
<dbReference type="AGR" id="HGNC:15950"/>
<dbReference type="CTD" id="83482"/>
<dbReference type="DisGeNET" id="83482"/>
<dbReference type="GeneCards" id="SCRT1"/>
<dbReference type="HGNC" id="HGNC:15950">
    <property type="gene designation" value="SCRT1"/>
</dbReference>
<dbReference type="HPA" id="ENSG00000261678">
    <property type="expression patterns" value="Tissue enriched (brain)"/>
</dbReference>
<dbReference type="MIM" id="605858">
    <property type="type" value="gene"/>
</dbReference>
<dbReference type="neXtProt" id="NX_Q9BWW7"/>
<dbReference type="OpenTargets" id="ENSG00000261678"/>
<dbReference type="PharmGKB" id="PA35015"/>
<dbReference type="VEuPathDB" id="HostDB:ENSG00000261678"/>
<dbReference type="eggNOG" id="KOG2462">
    <property type="taxonomic scope" value="Eukaryota"/>
</dbReference>
<dbReference type="GeneTree" id="ENSGT00940000154491"/>
<dbReference type="HOGENOM" id="CLU_002678_42_3_1"/>
<dbReference type="InParanoid" id="Q9BWW7"/>
<dbReference type="OMA" id="RCHKAFA"/>
<dbReference type="OrthoDB" id="5428132at2759"/>
<dbReference type="PAN-GO" id="Q9BWW7">
    <property type="GO annotations" value="3 GO annotations based on evolutionary models"/>
</dbReference>
<dbReference type="PhylomeDB" id="Q9BWW7"/>
<dbReference type="TreeFam" id="TF315515"/>
<dbReference type="PathwayCommons" id="Q9BWW7"/>
<dbReference type="BioGRID-ORCS" id="83482">
    <property type="hits" value="46 hits in 1164 CRISPR screens"/>
</dbReference>
<dbReference type="GenomeRNAi" id="83482"/>
<dbReference type="Pharos" id="Q9BWW7">
    <property type="development level" value="Tbio"/>
</dbReference>
<dbReference type="PRO" id="PR:Q9BWW7"/>
<dbReference type="Proteomes" id="UP000005640">
    <property type="component" value="Chromosome 8"/>
</dbReference>
<dbReference type="RNAct" id="Q9BWW7">
    <property type="molecule type" value="protein"/>
</dbReference>
<dbReference type="Bgee" id="ENSG00000261678">
    <property type="expression patterns" value="Expressed in primary visual cortex and 35 other cell types or tissues"/>
</dbReference>
<dbReference type="GO" id="GO:0016604">
    <property type="term" value="C:nuclear body"/>
    <property type="evidence" value="ECO:0000314"/>
    <property type="project" value="HPA"/>
</dbReference>
<dbReference type="GO" id="GO:0003700">
    <property type="term" value="F:DNA-binding transcription factor activity"/>
    <property type="evidence" value="ECO:0000303"/>
    <property type="project" value="UniProtKB"/>
</dbReference>
<dbReference type="GO" id="GO:0000981">
    <property type="term" value="F:DNA-binding transcription factor activity, RNA polymerase II-specific"/>
    <property type="evidence" value="ECO:0000318"/>
    <property type="project" value="GO_Central"/>
</dbReference>
<dbReference type="GO" id="GO:0001227">
    <property type="term" value="F:DNA-binding transcription repressor activity, RNA polymerase II-specific"/>
    <property type="evidence" value="ECO:0000314"/>
    <property type="project" value="NTNU_SB"/>
</dbReference>
<dbReference type="GO" id="GO:0000978">
    <property type="term" value="F:RNA polymerase II cis-regulatory region sequence-specific DNA binding"/>
    <property type="evidence" value="ECO:0000318"/>
    <property type="project" value="GO_Central"/>
</dbReference>
<dbReference type="GO" id="GO:0000977">
    <property type="term" value="F:RNA polymerase II transcription regulatory region sequence-specific DNA binding"/>
    <property type="evidence" value="ECO:0000314"/>
    <property type="project" value="NTNU_SB"/>
</dbReference>
<dbReference type="GO" id="GO:0043565">
    <property type="term" value="F:sequence-specific DNA binding"/>
    <property type="evidence" value="ECO:0000314"/>
    <property type="project" value="NTNU_SB"/>
</dbReference>
<dbReference type="GO" id="GO:1990837">
    <property type="term" value="F:sequence-specific double-stranded DNA binding"/>
    <property type="evidence" value="ECO:0000314"/>
    <property type="project" value="ARUK-UCL"/>
</dbReference>
<dbReference type="GO" id="GO:0008270">
    <property type="term" value="F:zinc ion binding"/>
    <property type="evidence" value="ECO:0007669"/>
    <property type="project" value="UniProtKB-KW"/>
</dbReference>
<dbReference type="GO" id="GO:0000122">
    <property type="term" value="P:negative regulation of transcription by RNA polymerase II"/>
    <property type="evidence" value="ECO:0000314"/>
    <property type="project" value="NTNU_SB"/>
</dbReference>
<dbReference type="GO" id="GO:0006355">
    <property type="term" value="P:regulation of DNA-templated transcription"/>
    <property type="evidence" value="ECO:0000318"/>
    <property type="project" value="GO_Central"/>
</dbReference>
<dbReference type="GO" id="GO:2001222">
    <property type="term" value="P:regulation of neuron migration"/>
    <property type="evidence" value="ECO:0007669"/>
    <property type="project" value="Ensembl"/>
</dbReference>
<dbReference type="FunFam" id="3.30.160.60:FF:000560">
    <property type="entry name" value="Scratch family transcriptional repressor 1"/>
    <property type="match status" value="1"/>
</dbReference>
<dbReference type="FunFam" id="3.30.160.60:FF:000043">
    <property type="entry name" value="Scratch family zinc finger 2"/>
    <property type="match status" value="1"/>
</dbReference>
<dbReference type="FunFam" id="3.30.160.60:FF:000169">
    <property type="entry name" value="transcriptional repressor scratch 2"/>
    <property type="match status" value="1"/>
</dbReference>
<dbReference type="FunFam" id="3.30.160.60:FF:000207">
    <property type="entry name" value="zinc finger protein SNAI2"/>
    <property type="match status" value="1"/>
</dbReference>
<dbReference type="Gene3D" id="3.30.160.60">
    <property type="entry name" value="Classic Zinc Finger"/>
    <property type="match status" value="4"/>
</dbReference>
<dbReference type="InterPro" id="IPR050527">
    <property type="entry name" value="Snail/Krueppel_Znf"/>
</dbReference>
<dbReference type="InterPro" id="IPR036236">
    <property type="entry name" value="Znf_C2H2_sf"/>
</dbReference>
<dbReference type="InterPro" id="IPR013087">
    <property type="entry name" value="Znf_C2H2_type"/>
</dbReference>
<dbReference type="PANTHER" id="PTHR24388:SF60">
    <property type="entry name" value="TRANSCRIPTIONAL REPRESSOR SCRATCH 1"/>
    <property type="match status" value="1"/>
</dbReference>
<dbReference type="PANTHER" id="PTHR24388">
    <property type="entry name" value="ZINC FINGER PROTEIN"/>
    <property type="match status" value="1"/>
</dbReference>
<dbReference type="Pfam" id="PF00096">
    <property type="entry name" value="zf-C2H2"/>
    <property type="match status" value="4"/>
</dbReference>
<dbReference type="Pfam" id="PF13912">
    <property type="entry name" value="zf-C2H2_6"/>
    <property type="match status" value="1"/>
</dbReference>
<dbReference type="SMART" id="SM00355">
    <property type="entry name" value="ZnF_C2H2"/>
    <property type="match status" value="5"/>
</dbReference>
<dbReference type="SUPFAM" id="SSF57667">
    <property type="entry name" value="beta-beta-alpha zinc fingers"/>
    <property type="match status" value="3"/>
</dbReference>
<dbReference type="PROSITE" id="PS00028">
    <property type="entry name" value="ZINC_FINGER_C2H2_1"/>
    <property type="match status" value="4"/>
</dbReference>
<dbReference type="PROSITE" id="PS50157">
    <property type="entry name" value="ZINC_FINGER_C2H2_2"/>
    <property type="match status" value="4"/>
</dbReference>